<proteinExistence type="inferred from homology"/>
<evidence type="ECO:0000255" key="1">
    <source>
        <dbReference type="HAMAP-Rule" id="MF_01010"/>
    </source>
</evidence>
<sequence>MKQQAKSRKPQQPEYIFQVETLSHEGRGIAHYGSHPDHPADKHGKKVFIRYALPGETVKAQITHEAKRLEEAEMVALLAEPSANRVEAVCPHYGICGGCSMQHIHPDEQICLKQNVLQSHLQHFAGIQPEQWLEPIRSLQSDYRRRARIGVRYLPKQDRLILGFREHHSNRLTSIHTCSVLDKKLSDSLPELRNLLQSLKGKAHIGHVELAKGDYETSLLVRHIEKLNNADVNQLRQFALHKGWQLYLQPKGPESLRRIDEEQGAMRLHYALNAFDVNFAFSPLDFTQVNATVNEQMVQLACELLQLQQGERVLDLFCGLGNFSLPLARCVGAKGQVVGVEASEEMVQRATDNAKRNNLVQASFFSQDLTKDFSHHSWANQGFDALLIDPPRAGAYEIMQYVPNFGAKRIVYVSCNPATLARDAGVLVQHGYQLKKAAVMDMFTHTEHVESIALFEKIQEIND</sequence>
<organism>
    <name type="scientific">Acinetobacter baumannii (strain ACICU)</name>
    <dbReference type="NCBI Taxonomy" id="405416"/>
    <lineage>
        <taxon>Bacteria</taxon>
        <taxon>Pseudomonadati</taxon>
        <taxon>Pseudomonadota</taxon>
        <taxon>Gammaproteobacteria</taxon>
        <taxon>Moraxellales</taxon>
        <taxon>Moraxellaceae</taxon>
        <taxon>Acinetobacter</taxon>
        <taxon>Acinetobacter calcoaceticus/baumannii complex</taxon>
    </lineage>
</organism>
<reference key="1">
    <citation type="journal article" date="2008" name="Antimicrob. Agents Chemother.">
        <title>Whole-genome pyrosequencing of an epidemic multidrug-resistant Acinetobacter baumannii strain belonging to the European clone II group.</title>
        <authorList>
            <person name="Iacono M."/>
            <person name="Villa L."/>
            <person name="Fortini D."/>
            <person name="Bordoni R."/>
            <person name="Imperi F."/>
            <person name="Bonnal R.J."/>
            <person name="Sicheritz-Ponten T."/>
            <person name="De Bellis G."/>
            <person name="Visca P."/>
            <person name="Cassone A."/>
            <person name="Carattoli A."/>
        </authorList>
    </citation>
    <scope>NUCLEOTIDE SEQUENCE [LARGE SCALE GENOMIC DNA]</scope>
    <source>
        <strain>ACICU</strain>
    </source>
</reference>
<accession>B2HTF7</accession>
<gene>
    <name evidence="1" type="primary">rlmD</name>
    <name type="synonym">rumA</name>
    <name type="ordered locus">ACICU_00582</name>
</gene>
<feature type="chain" id="PRO_1000200836" description="23S rRNA (uracil(1939)-C(5))-methyltransferase RlmD">
    <location>
        <begin position="1"/>
        <end position="463"/>
    </location>
</feature>
<feature type="domain" description="TRAM" evidence="1">
    <location>
        <begin position="6"/>
        <end position="76"/>
    </location>
</feature>
<feature type="active site" description="Nucleophile" evidence="1">
    <location>
        <position position="415"/>
    </location>
</feature>
<feature type="binding site" evidence="1">
    <location>
        <position position="90"/>
    </location>
    <ligand>
        <name>[4Fe-4S] cluster</name>
        <dbReference type="ChEBI" id="CHEBI:49883"/>
    </ligand>
</feature>
<feature type="binding site" evidence="1">
    <location>
        <position position="96"/>
    </location>
    <ligand>
        <name>[4Fe-4S] cluster</name>
        <dbReference type="ChEBI" id="CHEBI:49883"/>
    </ligand>
</feature>
<feature type="binding site" evidence="1">
    <location>
        <position position="99"/>
    </location>
    <ligand>
        <name>[4Fe-4S] cluster</name>
        <dbReference type="ChEBI" id="CHEBI:49883"/>
    </ligand>
</feature>
<feature type="binding site" evidence="1">
    <location>
        <position position="178"/>
    </location>
    <ligand>
        <name>[4Fe-4S] cluster</name>
        <dbReference type="ChEBI" id="CHEBI:49883"/>
    </ligand>
</feature>
<feature type="binding site" evidence="1">
    <location>
        <position position="288"/>
    </location>
    <ligand>
        <name>S-adenosyl-L-methionine</name>
        <dbReference type="ChEBI" id="CHEBI:59789"/>
    </ligand>
</feature>
<feature type="binding site" evidence="1">
    <location>
        <position position="317"/>
    </location>
    <ligand>
        <name>S-adenosyl-L-methionine</name>
        <dbReference type="ChEBI" id="CHEBI:59789"/>
    </ligand>
</feature>
<feature type="binding site" evidence="1">
    <location>
        <position position="322"/>
    </location>
    <ligand>
        <name>S-adenosyl-L-methionine</name>
        <dbReference type="ChEBI" id="CHEBI:59789"/>
    </ligand>
</feature>
<feature type="binding site" evidence="1">
    <location>
        <position position="341"/>
    </location>
    <ligand>
        <name>S-adenosyl-L-methionine</name>
        <dbReference type="ChEBI" id="CHEBI:59789"/>
    </ligand>
</feature>
<feature type="binding site" evidence="1">
    <location>
        <position position="368"/>
    </location>
    <ligand>
        <name>S-adenosyl-L-methionine</name>
        <dbReference type="ChEBI" id="CHEBI:59789"/>
    </ligand>
</feature>
<feature type="binding site" evidence="1">
    <location>
        <position position="389"/>
    </location>
    <ligand>
        <name>S-adenosyl-L-methionine</name>
        <dbReference type="ChEBI" id="CHEBI:59789"/>
    </ligand>
</feature>
<name>RLMD_ACIBC</name>
<keyword id="KW-0004">4Fe-4S</keyword>
<keyword id="KW-0408">Iron</keyword>
<keyword id="KW-0411">Iron-sulfur</keyword>
<keyword id="KW-0479">Metal-binding</keyword>
<keyword id="KW-0489">Methyltransferase</keyword>
<keyword id="KW-0698">rRNA processing</keyword>
<keyword id="KW-0949">S-adenosyl-L-methionine</keyword>
<keyword id="KW-0808">Transferase</keyword>
<dbReference type="EC" id="2.1.1.190" evidence="1"/>
<dbReference type="EMBL" id="CP000863">
    <property type="protein sequence ID" value="ACC55894.1"/>
    <property type="molecule type" value="Genomic_DNA"/>
</dbReference>
<dbReference type="RefSeq" id="WP_000813062.1">
    <property type="nucleotide sequence ID" value="NZ_CP031380.1"/>
</dbReference>
<dbReference type="SMR" id="B2HTF7"/>
<dbReference type="KEGG" id="abc:ACICU_00582"/>
<dbReference type="HOGENOM" id="CLU_014689_8_2_6"/>
<dbReference type="Proteomes" id="UP000008839">
    <property type="component" value="Chromosome"/>
</dbReference>
<dbReference type="GO" id="GO:0051539">
    <property type="term" value="F:4 iron, 4 sulfur cluster binding"/>
    <property type="evidence" value="ECO:0007669"/>
    <property type="project" value="UniProtKB-KW"/>
</dbReference>
<dbReference type="GO" id="GO:0005506">
    <property type="term" value="F:iron ion binding"/>
    <property type="evidence" value="ECO:0007669"/>
    <property type="project" value="UniProtKB-UniRule"/>
</dbReference>
<dbReference type="GO" id="GO:0003723">
    <property type="term" value="F:RNA binding"/>
    <property type="evidence" value="ECO:0007669"/>
    <property type="project" value="InterPro"/>
</dbReference>
<dbReference type="GO" id="GO:0070041">
    <property type="term" value="F:rRNA (uridine-C5-)-methyltransferase activity"/>
    <property type="evidence" value="ECO:0007669"/>
    <property type="project" value="UniProtKB-UniRule"/>
</dbReference>
<dbReference type="GO" id="GO:0070475">
    <property type="term" value="P:rRNA base methylation"/>
    <property type="evidence" value="ECO:0007669"/>
    <property type="project" value="TreeGrafter"/>
</dbReference>
<dbReference type="CDD" id="cd02440">
    <property type="entry name" value="AdoMet_MTases"/>
    <property type="match status" value="1"/>
</dbReference>
<dbReference type="FunFam" id="3.40.50.150:FF:000009">
    <property type="entry name" value="23S rRNA (Uracil(1939)-C(5))-methyltransferase RlmD"/>
    <property type="match status" value="1"/>
</dbReference>
<dbReference type="Gene3D" id="2.40.50.1070">
    <property type="match status" value="1"/>
</dbReference>
<dbReference type="Gene3D" id="2.40.50.140">
    <property type="entry name" value="Nucleic acid-binding proteins"/>
    <property type="match status" value="1"/>
</dbReference>
<dbReference type="Gene3D" id="3.40.50.150">
    <property type="entry name" value="Vaccinia Virus protein VP39"/>
    <property type="match status" value="1"/>
</dbReference>
<dbReference type="HAMAP" id="MF_01010">
    <property type="entry name" value="23SrRNA_methyltr_RlmD"/>
    <property type="match status" value="1"/>
</dbReference>
<dbReference type="InterPro" id="IPR001566">
    <property type="entry name" value="23S_rRNA_MeTrfase_RlmD"/>
</dbReference>
<dbReference type="InterPro" id="IPR030390">
    <property type="entry name" value="MeTrfase_TrmA_AS"/>
</dbReference>
<dbReference type="InterPro" id="IPR012340">
    <property type="entry name" value="NA-bd_OB-fold"/>
</dbReference>
<dbReference type="InterPro" id="IPR029063">
    <property type="entry name" value="SAM-dependent_MTases_sf"/>
</dbReference>
<dbReference type="InterPro" id="IPR002792">
    <property type="entry name" value="TRAM_dom"/>
</dbReference>
<dbReference type="InterPro" id="IPR010280">
    <property type="entry name" value="U5_MeTrfase_fam"/>
</dbReference>
<dbReference type="NCBIfam" id="NF009639">
    <property type="entry name" value="PRK13168.1"/>
    <property type="match status" value="1"/>
</dbReference>
<dbReference type="NCBIfam" id="TIGR00479">
    <property type="entry name" value="rumA"/>
    <property type="match status" value="1"/>
</dbReference>
<dbReference type="PANTHER" id="PTHR11061:SF49">
    <property type="entry name" value="23S RRNA (URACIL(1939)-C(5))-METHYLTRANSFERASE RLMD"/>
    <property type="match status" value="1"/>
</dbReference>
<dbReference type="PANTHER" id="PTHR11061">
    <property type="entry name" value="RNA M5U METHYLTRANSFERASE"/>
    <property type="match status" value="1"/>
</dbReference>
<dbReference type="Pfam" id="PF01938">
    <property type="entry name" value="TRAM"/>
    <property type="match status" value="1"/>
</dbReference>
<dbReference type="Pfam" id="PF05958">
    <property type="entry name" value="tRNA_U5-meth_tr"/>
    <property type="match status" value="1"/>
</dbReference>
<dbReference type="SUPFAM" id="SSF50249">
    <property type="entry name" value="Nucleic acid-binding proteins"/>
    <property type="match status" value="1"/>
</dbReference>
<dbReference type="SUPFAM" id="SSF53335">
    <property type="entry name" value="S-adenosyl-L-methionine-dependent methyltransferases"/>
    <property type="match status" value="1"/>
</dbReference>
<dbReference type="PROSITE" id="PS51687">
    <property type="entry name" value="SAM_MT_RNA_M5U"/>
    <property type="match status" value="1"/>
</dbReference>
<dbReference type="PROSITE" id="PS50926">
    <property type="entry name" value="TRAM"/>
    <property type="match status" value="1"/>
</dbReference>
<dbReference type="PROSITE" id="PS01230">
    <property type="entry name" value="TRMA_1"/>
    <property type="match status" value="1"/>
</dbReference>
<protein>
    <recommendedName>
        <fullName evidence="1">23S rRNA (uracil(1939)-C(5))-methyltransferase RlmD</fullName>
        <ecNumber evidence="1">2.1.1.190</ecNumber>
    </recommendedName>
    <alternativeName>
        <fullName evidence="1">23S rRNA(m5U1939)-methyltransferase</fullName>
    </alternativeName>
</protein>
<comment type="function">
    <text evidence="1">Catalyzes the formation of 5-methyl-uridine at position 1939 (m5U1939) in 23S rRNA.</text>
</comment>
<comment type="catalytic activity">
    <reaction evidence="1">
        <text>uridine(1939) in 23S rRNA + S-adenosyl-L-methionine = 5-methyluridine(1939) in 23S rRNA + S-adenosyl-L-homocysteine + H(+)</text>
        <dbReference type="Rhea" id="RHEA:42908"/>
        <dbReference type="Rhea" id="RHEA-COMP:10278"/>
        <dbReference type="Rhea" id="RHEA-COMP:10279"/>
        <dbReference type="ChEBI" id="CHEBI:15378"/>
        <dbReference type="ChEBI" id="CHEBI:57856"/>
        <dbReference type="ChEBI" id="CHEBI:59789"/>
        <dbReference type="ChEBI" id="CHEBI:65315"/>
        <dbReference type="ChEBI" id="CHEBI:74447"/>
        <dbReference type="EC" id="2.1.1.190"/>
    </reaction>
</comment>
<comment type="similarity">
    <text evidence="1">Belongs to the class I-like SAM-binding methyltransferase superfamily. RNA M5U methyltransferase family. RlmD subfamily.</text>
</comment>